<accession>Q54CJ3</accession>
<name>6PGL_DICDI</name>
<feature type="chain" id="PRO_0000327748" description="Probable 6-phosphogluconolactonase">
    <location>
        <begin position="1"/>
        <end position="236"/>
    </location>
</feature>
<reference key="1">
    <citation type="journal article" date="2005" name="Nature">
        <title>The genome of the social amoeba Dictyostelium discoideum.</title>
        <authorList>
            <person name="Eichinger L."/>
            <person name="Pachebat J.A."/>
            <person name="Gloeckner G."/>
            <person name="Rajandream M.A."/>
            <person name="Sucgang R."/>
            <person name="Berriman M."/>
            <person name="Song J."/>
            <person name="Olsen R."/>
            <person name="Szafranski K."/>
            <person name="Xu Q."/>
            <person name="Tunggal B."/>
            <person name="Kummerfeld S."/>
            <person name="Madera M."/>
            <person name="Konfortov B.A."/>
            <person name="Rivero F."/>
            <person name="Bankier A.T."/>
            <person name="Lehmann R."/>
            <person name="Hamlin N."/>
            <person name="Davies R."/>
            <person name="Gaudet P."/>
            <person name="Fey P."/>
            <person name="Pilcher K."/>
            <person name="Chen G."/>
            <person name="Saunders D."/>
            <person name="Sodergren E.J."/>
            <person name="Davis P."/>
            <person name="Kerhornou A."/>
            <person name="Nie X."/>
            <person name="Hall N."/>
            <person name="Anjard C."/>
            <person name="Hemphill L."/>
            <person name="Bason N."/>
            <person name="Farbrother P."/>
            <person name="Desany B."/>
            <person name="Just E."/>
            <person name="Morio T."/>
            <person name="Rost R."/>
            <person name="Churcher C.M."/>
            <person name="Cooper J."/>
            <person name="Haydock S."/>
            <person name="van Driessche N."/>
            <person name="Cronin A."/>
            <person name="Goodhead I."/>
            <person name="Muzny D.M."/>
            <person name="Mourier T."/>
            <person name="Pain A."/>
            <person name="Lu M."/>
            <person name="Harper D."/>
            <person name="Lindsay R."/>
            <person name="Hauser H."/>
            <person name="James K.D."/>
            <person name="Quiles M."/>
            <person name="Madan Babu M."/>
            <person name="Saito T."/>
            <person name="Buchrieser C."/>
            <person name="Wardroper A."/>
            <person name="Felder M."/>
            <person name="Thangavelu M."/>
            <person name="Johnson D."/>
            <person name="Knights A."/>
            <person name="Loulseged H."/>
            <person name="Mungall K.L."/>
            <person name="Oliver K."/>
            <person name="Price C."/>
            <person name="Quail M.A."/>
            <person name="Urushihara H."/>
            <person name="Hernandez J."/>
            <person name="Rabbinowitsch E."/>
            <person name="Steffen D."/>
            <person name="Sanders M."/>
            <person name="Ma J."/>
            <person name="Kohara Y."/>
            <person name="Sharp S."/>
            <person name="Simmonds M.N."/>
            <person name="Spiegler S."/>
            <person name="Tivey A."/>
            <person name="Sugano S."/>
            <person name="White B."/>
            <person name="Walker D."/>
            <person name="Woodward J.R."/>
            <person name="Winckler T."/>
            <person name="Tanaka Y."/>
            <person name="Shaulsky G."/>
            <person name="Schleicher M."/>
            <person name="Weinstock G.M."/>
            <person name="Rosenthal A."/>
            <person name="Cox E.C."/>
            <person name="Chisholm R.L."/>
            <person name="Gibbs R.A."/>
            <person name="Loomis W.F."/>
            <person name="Platzer M."/>
            <person name="Kay R.R."/>
            <person name="Williams J.G."/>
            <person name="Dear P.H."/>
            <person name="Noegel A.A."/>
            <person name="Barrell B.G."/>
            <person name="Kuspa A."/>
        </authorList>
    </citation>
    <scope>NUCLEOTIDE SEQUENCE [LARGE SCALE GENOMIC DNA]</scope>
    <source>
        <strain>AX4</strain>
    </source>
</reference>
<organism>
    <name type="scientific">Dictyostelium discoideum</name>
    <name type="common">Social amoeba</name>
    <dbReference type="NCBI Taxonomy" id="44689"/>
    <lineage>
        <taxon>Eukaryota</taxon>
        <taxon>Amoebozoa</taxon>
        <taxon>Evosea</taxon>
        <taxon>Eumycetozoa</taxon>
        <taxon>Dictyostelia</taxon>
        <taxon>Dictyosteliales</taxon>
        <taxon>Dictyosteliaceae</taxon>
        <taxon>Dictyostelium</taxon>
    </lineage>
</organism>
<sequence>MTSKLINFITIEKERFEDECVKFIKNVITDSINSRNIATIGLSGGSTPKPIYEMLGNDSSIDWTKVYFFAVDERYIDKSSKDSIYDLISKSVFKNRENLLVDHFITPNTSLPLKECIETYSNDLKKLIEKSNGSPDLVTLGMGEDGHIASIFPNSPKSPLDETDLVYHTTTERFAIFDRITTNINFLASSKNKVFFMSGSSKKKVWDEMESSQINVSRWPAHKIISSGNTNVFYRE</sequence>
<keyword id="KW-0378">Hydrolase</keyword>
<keyword id="KW-1185">Reference proteome</keyword>
<dbReference type="EC" id="3.1.1.31"/>
<dbReference type="EMBL" id="AAFI02000197">
    <property type="protein sequence ID" value="EAL60998.1"/>
    <property type="molecule type" value="Genomic_DNA"/>
</dbReference>
<dbReference type="RefSeq" id="XP_629423.1">
    <property type="nucleotide sequence ID" value="XM_629421.1"/>
</dbReference>
<dbReference type="SMR" id="Q54CJ3"/>
<dbReference type="FunCoup" id="Q54CJ3">
    <property type="interactions" value="537"/>
</dbReference>
<dbReference type="STRING" id="44689.Q54CJ3"/>
<dbReference type="PaxDb" id="44689-DDB0231287"/>
<dbReference type="EnsemblProtists" id="EAL60998">
    <property type="protein sequence ID" value="EAL60998"/>
    <property type="gene ID" value="DDB_G0292898"/>
</dbReference>
<dbReference type="GeneID" id="8628942"/>
<dbReference type="KEGG" id="ddi:DDB_G0292898"/>
<dbReference type="dictyBase" id="DDB_G0292898">
    <property type="gene designation" value="pgl"/>
</dbReference>
<dbReference type="VEuPathDB" id="AmoebaDB:DDB_G0292898"/>
<dbReference type="eggNOG" id="KOG3147">
    <property type="taxonomic scope" value="Eukaryota"/>
</dbReference>
<dbReference type="HOGENOM" id="CLU_053947_2_0_1"/>
<dbReference type="InParanoid" id="Q54CJ3"/>
<dbReference type="OMA" id="YDKIVDW"/>
<dbReference type="PhylomeDB" id="Q54CJ3"/>
<dbReference type="Reactome" id="R-DDI-71336">
    <property type="pathway name" value="Pentose phosphate pathway"/>
</dbReference>
<dbReference type="UniPathway" id="UPA00115">
    <property type="reaction ID" value="UER00409"/>
</dbReference>
<dbReference type="PRO" id="PR:Q54CJ3"/>
<dbReference type="Proteomes" id="UP000002195">
    <property type="component" value="Chromosome 6"/>
</dbReference>
<dbReference type="GO" id="GO:0005829">
    <property type="term" value="C:cytosol"/>
    <property type="evidence" value="ECO:0000318"/>
    <property type="project" value="GO_Central"/>
</dbReference>
<dbReference type="GO" id="GO:0017057">
    <property type="term" value="F:6-phosphogluconolactonase activity"/>
    <property type="evidence" value="ECO:0000318"/>
    <property type="project" value="GO_Central"/>
</dbReference>
<dbReference type="GO" id="GO:0005975">
    <property type="term" value="P:carbohydrate metabolic process"/>
    <property type="evidence" value="ECO:0007669"/>
    <property type="project" value="InterPro"/>
</dbReference>
<dbReference type="GO" id="GO:0009051">
    <property type="term" value="P:pentose-phosphate shunt, oxidative branch"/>
    <property type="evidence" value="ECO:0000318"/>
    <property type="project" value="GO_Central"/>
</dbReference>
<dbReference type="CDD" id="cd01400">
    <property type="entry name" value="6PGL"/>
    <property type="match status" value="1"/>
</dbReference>
<dbReference type="Gene3D" id="3.40.50.1360">
    <property type="match status" value="1"/>
</dbReference>
<dbReference type="InterPro" id="IPR005900">
    <property type="entry name" value="6-phosphogluconolactonase_DevB"/>
</dbReference>
<dbReference type="InterPro" id="IPR006148">
    <property type="entry name" value="Glc/Gal-6P_isomerase"/>
</dbReference>
<dbReference type="InterPro" id="IPR037171">
    <property type="entry name" value="NagB/RpiA_transferase-like"/>
</dbReference>
<dbReference type="InterPro" id="IPR039104">
    <property type="entry name" value="PGLS"/>
</dbReference>
<dbReference type="NCBIfam" id="TIGR01198">
    <property type="entry name" value="pgl"/>
    <property type="match status" value="1"/>
</dbReference>
<dbReference type="PANTHER" id="PTHR11054">
    <property type="entry name" value="6-PHOSPHOGLUCONOLACTONASE"/>
    <property type="match status" value="1"/>
</dbReference>
<dbReference type="PANTHER" id="PTHR11054:SF0">
    <property type="entry name" value="6-PHOSPHOGLUCONOLACTONASE"/>
    <property type="match status" value="1"/>
</dbReference>
<dbReference type="Pfam" id="PF01182">
    <property type="entry name" value="Glucosamine_iso"/>
    <property type="match status" value="1"/>
</dbReference>
<dbReference type="SUPFAM" id="SSF100950">
    <property type="entry name" value="NagB/RpiA/CoA transferase-like"/>
    <property type="match status" value="1"/>
</dbReference>
<comment type="function">
    <text evidence="1">Hydrolysis of 6-phosphogluconolactone to 6-phosphogluconate.</text>
</comment>
<comment type="catalytic activity">
    <reaction>
        <text>6-phospho-D-glucono-1,5-lactone + H2O = 6-phospho-D-gluconate + H(+)</text>
        <dbReference type="Rhea" id="RHEA:12556"/>
        <dbReference type="ChEBI" id="CHEBI:15377"/>
        <dbReference type="ChEBI" id="CHEBI:15378"/>
        <dbReference type="ChEBI" id="CHEBI:57955"/>
        <dbReference type="ChEBI" id="CHEBI:58759"/>
        <dbReference type="EC" id="3.1.1.31"/>
    </reaction>
</comment>
<comment type="pathway">
    <text>Carbohydrate degradation; pentose phosphate pathway; D-ribulose 5-phosphate from D-glucose 6-phosphate (oxidative stage): step 2/3.</text>
</comment>
<comment type="similarity">
    <text evidence="2">Belongs to the glucosamine/galactosamine-6-phosphate isomerase family. 6-phosphogluconolactonase subfamily.</text>
</comment>
<evidence type="ECO:0000250" key="1"/>
<evidence type="ECO:0000305" key="2"/>
<gene>
    <name type="primary">pgl</name>
    <name type="synonym">pgls</name>
    <name type="ORF">DDB_G0292898</name>
</gene>
<proteinExistence type="inferred from homology"/>
<protein>
    <recommendedName>
        <fullName>Probable 6-phosphogluconolactonase</fullName>
        <shortName>6PGL</shortName>
        <ecNumber>3.1.1.31</ecNumber>
    </recommendedName>
</protein>